<name>CH604_BRASB</name>
<comment type="function">
    <text evidence="1">Together with its co-chaperonin GroES, plays an essential role in assisting protein folding. The GroEL-GroES system forms a nano-cage that allows encapsulation of the non-native substrate proteins and provides a physical environment optimized to promote and accelerate protein folding.</text>
</comment>
<comment type="catalytic activity">
    <reaction evidence="1">
        <text>ATP + H2O + a folded polypeptide = ADP + phosphate + an unfolded polypeptide.</text>
        <dbReference type="EC" id="5.6.1.7"/>
    </reaction>
</comment>
<comment type="subunit">
    <text evidence="1">Forms a cylinder of 14 subunits composed of two heptameric rings stacked back-to-back. Interacts with the co-chaperonin GroES.</text>
</comment>
<comment type="subcellular location">
    <subcellularLocation>
        <location evidence="1">Cytoplasm</location>
    </subcellularLocation>
</comment>
<comment type="similarity">
    <text evidence="1">Belongs to the chaperonin (HSP60) family.</text>
</comment>
<accession>A5EM76</accession>
<dbReference type="EC" id="5.6.1.7" evidence="1"/>
<dbReference type="EMBL" id="CP000494">
    <property type="protein sequence ID" value="ABQ37270.1"/>
    <property type="molecule type" value="Genomic_DNA"/>
</dbReference>
<dbReference type="RefSeq" id="WP_012045235.1">
    <property type="nucleotide sequence ID" value="NC_009485.1"/>
</dbReference>
<dbReference type="SMR" id="A5EM76"/>
<dbReference type="STRING" id="288000.BBta_5285"/>
<dbReference type="KEGG" id="bbt:BBta_5285"/>
<dbReference type="eggNOG" id="COG0459">
    <property type="taxonomic scope" value="Bacteria"/>
</dbReference>
<dbReference type="HOGENOM" id="CLU_016503_3_0_5"/>
<dbReference type="OrthoDB" id="9766614at2"/>
<dbReference type="Proteomes" id="UP000000246">
    <property type="component" value="Chromosome"/>
</dbReference>
<dbReference type="GO" id="GO:0005737">
    <property type="term" value="C:cytoplasm"/>
    <property type="evidence" value="ECO:0007669"/>
    <property type="project" value="UniProtKB-SubCell"/>
</dbReference>
<dbReference type="GO" id="GO:0005524">
    <property type="term" value="F:ATP binding"/>
    <property type="evidence" value="ECO:0007669"/>
    <property type="project" value="UniProtKB-UniRule"/>
</dbReference>
<dbReference type="GO" id="GO:0140662">
    <property type="term" value="F:ATP-dependent protein folding chaperone"/>
    <property type="evidence" value="ECO:0007669"/>
    <property type="project" value="InterPro"/>
</dbReference>
<dbReference type="GO" id="GO:0016853">
    <property type="term" value="F:isomerase activity"/>
    <property type="evidence" value="ECO:0007669"/>
    <property type="project" value="UniProtKB-KW"/>
</dbReference>
<dbReference type="GO" id="GO:0051082">
    <property type="term" value="F:unfolded protein binding"/>
    <property type="evidence" value="ECO:0007669"/>
    <property type="project" value="UniProtKB-UniRule"/>
</dbReference>
<dbReference type="GO" id="GO:0042026">
    <property type="term" value="P:protein refolding"/>
    <property type="evidence" value="ECO:0007669"/>
    <property type="project" value="UniProtKB-UniRule"/>
</dbReference>
<dbReference type="CDD" id="cd03344">
    <property type="entry name" value="GroEL"/>
    <property type="match status" value="1"/>
</dbReference>
<dbReference type="FunFam" id="1.10.560.10:FF:000001">
    <property type="entry name" value="60 kDa chaperonin"/>
    <property type="match status" value="1"/>
</dbReference>
<dbReference type="FunFam" id="3.50.7.10:FF:000001">
    <property type="entry name" value="60 kDa chaperonin"/>
    <property type="match status" value="1"/>
</dbReference>
<dbReference type="Gene3D" id="3.50.7.10">
    <property type="entry name" value="GroEL"/>
    <property type="match status" value="1"/>
</dbReference>
<dbReference type="Gene3D" id="1.10.560.10">
    <property type="entry name" value="GroEL-like equatorial domain"/>
    <property type="match status" value="1"/>
</dbReference>
<dbReference type="Gene3D" id="3.30.260.10">
    <property type="entry name" value="TCP-1-like chaperonin intermediate domain"/>
    <property type="match status" value="1"/>
</dbReference>
<dbReference type="HAMAP" id="MF_00600">
    <property type="entry name" value="CH60"/>
    <property type="match status" value="1"/>
</dbReference>
<dbReference type="InterPro" id="IPR018370">
    <property type="entry name" value="Chaperonin_Cpn60_CS"/>
</dbReference>
<dbReference type="InterPro" id="IPR001844">
    <property type="entry name" value="Cpn60/GroEL"/>
</dbReference>
<dbReference type="InterPro" id="IPR002423">
    <property type="entry name" value="Cpn60/GroEL/TCP-1"/>
</dbReference>
<dbReference type="InterPro" id="IPR027409">
    <property type="entry name" value="GroEL-like_apical_dom_sf"/>
</dbReference>
<dbReference type="InterPro" id="IPR027413">
    <property type="entry name" value="GROEL-like_equatorial_sf"/>
</dbReference>
<dbReference type="InterPro" id="IPR027410">
    <property type="entry name" value="TCP-1-like_intermed_sf"/>
</dbReference>
<dbReference type="NCBIfam" id="TIGR02348">
    <property type="entry name" value="GroEL"/>
    <property type="match status" value="1"/>
</dbReference>
<dbReference type="NCBIfam" id="NF000592">
    <property type="entry name" value="PRK00013.1"/>
    <property type="match status" value="1"/>
</dbReference>
<dbReference type="NCBIfam" id="NF009487">
    <property type="entry name" value="PRK12849.1"/>
    <property type="match status" value="1"/>
</dbReference>
<dbReference type="NCBIfam" id="NF009488">
    <property type="entry name" value="PRK12850.1"/>
    <property type="match status" value="1"/>
</dbReference>
<dbReference type="NCBIfam" id="NF009489">
    <property type="entry name" value="PRK12851.1"/>
    <property type="match status" value="1"/>
</dbReference>
<dbReference type="NCBIfam" id="NF010704">
    <property type="entry name" value="PRK14104.1"/>
    <property type="match status" value="1"/>
</dbReference>
<dbReference type="PANTHER" id="PTHR45633">
    <property type="entry name" value="60 KDA HEAT SHOCK PROTEIN, MITOCHONDRIAL"/>
    <property type="match status" value="1"/>
</dbReference>
<dbReference type="Pfam" id="PF00118">
    <property type="entry name" value="Cpn60_TCP1"/>
    <property type="match status" value="1"/>
</dbReference>
<dbReference type="PRINTS" id="PR00298">
    <property type="entry name" value="CHAPERONIN60"/>
</dbReference>
<dbReference type="SUPFAM" id="SSF52029">
    <property type="entry name" value="GroEL apical domain-like"/>
    <property type="match status" value="1"/>
</dbReference>
<dbReference type="SUPFAM" id="SSF48592">
    <property type="entry name" value="GroEL equatorial domain-like"/>
    <property type="match status" value="1"/>
</dbReference>
<dbReference type="SUPFAM" id="SSF54849">
    <property type="entry name" value="GroEL-intermediate domain like"/>
    <property type="match status" value="1"/>
</dbReference>
<dbReference type="PROSITE" id="PS00296">
    <property type="entry name" value="CHAPERONINS_CPN60"/>
    <property type="match status" value="1"/>
</dbReference>
<proteinExistence type="inferred from homology"/>
<protein>
    <recommendedName>
        <fullName evidence="1">Chaperonin GroEL 4</fullName>
        <ecNumber evidence="1">5.6.1.7</ecNumber>
    </recommendedName>
    <alternativeName>
        <fullName evidence="1">60 kDa chaperonin 4</fullName>
    </alternativeName>
    <alternativeName>
        <fullName evidence="1">Chaperonin-60 4</fullName>
        <shortName evidence="1">Cpn60 4</shortName>
    </alternativeName>
</protein>
<keyword id="KW-0067">ATP-binding</keyword>
<keyword id="KW-0143">Chaperone</keyword>
<keyword id="KW-0963">Cytoplasm</keyword>
<keyword id="KW-0413">Isomerase</keyword>
<keyword id="KW-0547">Nucleotide-binding</keyword>
<keyword id="KW-1185">Reference proteome</keyword>
<reference key="1">
    <citation type="journal article" date="2007" name="Science">
        <title>Legumes symbioses: absence of nod genes in photosynthetic bradyrhizobia.</title>
        <authorList>
            <person name="Giraud E."/>
            <person name="Moulin L."/>
            <person name="Vallenet D."/>
            <person name="Barbe V."/>
            <person name="Cytryn E."/>
            <person name="Avarre J.-C."/>
            <person name="Jaubert M."/>
            <person name="Simon D."/>
            <person name="Cartieaux F."/>
            <person name="Prin Y."/>
            <person name="Bena G."/>
            <person name="Hannibal L."/>
            <person name="Fardoux J."/>
            <person name="Kojadinovic M."/>
            <person name="Vuillet L."/>
            <person name="Lajus A."/>
            <person name="Cruveiller S."/>
            <person name="Rouy Z."/>
            <person name="Mangenot S."/>
            <person name="Segurens B."/>
            <person name="Dossat C."/>
            <person name="Franck W.L."/>
            <person name="Chang W.-S."/>
            <person name="Saunders E."/>
            <person name="Bruce D."/>
            <person name="Richardson P."/>
            <person name="Normand P."/>
            <person name="Dreyfus B."/>
            <person name="Pignol D."/>
            <person name="Stacey G."/>
            <person name="Emerich D."/>
            <person name="Vermeglio A."/>
            <person name="Medigue C."/>
            <person name="Sadowsky M."/>
        </authorList>
    </citation>
    <scope>NUCLEOTIDE SEQUENCE [LARGE SCALE GENOMIC DNA]</scope>
    <source>
        <strain>BTAi1 / ATCC BAA-1182</strain>
    </source>
</reference>
<organism>
    <name type="scientific">Bradyrhizobium sp. (strain BTAi1 / ATCC BAA-1182)</name>
    <dbReference type="NCBI Taxonomy" id="288000"/>
    <lineage>
        <taxon>Bacteria</taxon>
        <taxon>Pseudomonadati</taxon>
        <taxon>Pseudomonadota</taxon>
        <taxon>Alphaproteobacteria</taxon>
        <taxon>Hyphomicrobiales</taxon>
        <taxon>Nitrobacteraceae</taxon>
        <taxon>Bradyrhizobium</taxon>
    </lineage>
</organism>
<sequence>MSAKDVKFGVEARDRMLRGVDILANAVKVTLGPKGRNVVLDKSFGAPRITKDGVTVAKEIELDDKFENMGAQMVREVASKSADAAGDGTTTATVLAQAIVREGAKAVAAGMNPMDLKRGIDLAVEAVVADLVKNSKKVTSNDEIAQVGTISANGDSEIGKFLADAMKKVGNEGVITVEEAKSLETELDVVEGMQFDRGYISPYFVTNADKMRVEMDDAYILINEKKLSSLNELLPLLEAVVQTGKPLVIVAEDVEGEALATLVVNRLRGGLKVAAVKAPGFGDRRKAMLQDIAILTGGQAISEDLGIKLENVNLSMLGRAKKVMIDKENTTIVNGAGKKADIEARVAQIKAQIEETTSDYDREKLQERLAKLAGGVAVIRVGGATEVEVKERKDRVDDAMHATRAAVEEGILPGGGVALLRASEQLKGLRTKNEDQKTGVEIVRKALSAPARQIAINAGEDGSVIVGKILEKEQYAYGFDSQTGDYVNMVSKGIIDPTKVVRTAIQNAASVASLLITTEAMVAELPKKNAGGPAMPPGGGMGGMDF</sequence>
<feature type="chain" id="PRO_0000331977" description="Chaperonin GroEL 4">
    <location>
        <begin position="1"/>
        <end position="546"/>
    </location>
</feature>
<feature type="binding site" evidence="1">
    <location>
        <begin position="30"/>
        <end position="33"/>
    </location>
    <ligand>
        <name>ATP</name>
        <dbReference type="ChEBI" id="CHEBI:30616"/>
    </ligand>
</feature>
<feature type="binding site" evidence="1">
    <location>
        <position position="51"/>
    </location>
    <ligand>
        <name>ATP</name>
        <dbReference type="ChEBI" id="CHEBI:30616"/>
    </ligand>
</feature>
<feature type="binding site" evidence="1">
    <location>
        <begin position="87"/>
        <end position="91"/>
    </location>
    <ligand>
        <name>ATP</name>
        <dbReference type="ChEBI" id="CHEBI:30616"/>
    </ligand>
</feature>
<feature type="binding site" evidence="1">
    <location>
        <position position="415"/>
    </location>
    <ligand>
        <name>ATP</name>
        <dbReference type="ChEBI" id="CHEBI:30616"/>
    </ligand>
</feature>
<feature type="binding site" evidence="1">
    <location>
        <position position="496"/>
    </location>
    <ligand>
        <name>ATP</name>
        <dbReference type="ChEBI" id="CHEBI:30616"/>
    </ligand>
</feature>
<evidence type="ECO:0000255" key="1">
    <source>
        <dbReference type="HAMAP-Rule" id="MF_00600"/>
    </source>
</evidence>
<gene>
    <name evidence="1" type="primary">groEL4</name>
    <name evidence="1" type="synonym">groL4</name>
    <name type="ordered locus">BBta_5285</name>
</gene>